<proteinExistence type="evidence at protein level"/>
<accession>Q4WI89</accession>
<keyword id="KW-0238">DNA-binding</keyword>
<keyword id="KW-0472">Membrane</keyword>
<keyword id="KW-0479">Metal-binding</keyword>
<keyword id="KW-0539">Nucleus</keyword>
<keyword id="KW-1185">Reference proteome</keyword>
<keyword id="KW-0804">Transcription</keyword>
<keyword id="KW-0805">Transcription regulation</keyword>
<keyword id="KW-0812">Transmembrane</keyword>
<keyword id="KW-1133">Transmembrane helix</keyword>
<keyword id="KW-0843">Virulence</keyword>
<keyword id="KW-0862">Zinc</keyword>
<evidence type="ECO:0000255" key="1"/>
<evidence type="ECO:0000255" key="2">
    <source>
        <dbReference type="PROSITE-ProRule" id="PRU00227"/>
    </source>
</evidence>
<evidence type="ECO:0000256" key="3">
    <source>
        <dbReference type="SAM" id="MobiDB-lite"/>
    </source>
</evidence>
<evidence type="ECO:0000269" key="4">
    <source>
    </source>
</evidence>
<evidence type="ECO:0000269" key="5">
    <source>
    </source>
</evidence>
<evidence type="ECO:0000269" key="6">
    <source>
    </source>
</evidence>
<evidence type="ECO:0000269" key="7">
    <source>
    </source>
</evidence>
<evidence type="ECO:0000269" key="8">
    <source>
    </source>
</evidence>
<evidence type="ECO:0000269" key="9">
    <source>
    </source>
</evidence>
<evidence type="ECO:0000269" key="10">
    <source>
    </source>
</evidence>
<evidence type="ECO:0000303" key="11">
    <source>
    </source>
</evidence>
<feature type="chain" id="PRO_0000448724" description="ABC-transporter-regulating transcription factor">
    <location>
        <begin position="1"/>
        <end position="895"/>
    </location>
</feature>
<feature type="transmembrane region" description="Helical" evidence="1">
    <location>
        <begin position="648"/>
        <end position="668"/>
    </location>
</feature>
<feature type="DNA-binding region" description="Zn(2)-C6 fungal-type" evidence="2">
    <location>
        <begin position="69"/>
        <end position="96"/>
    </location>
</feature>
<feature type="region of interest" description="Disordered" evidence="3">
    <location>
        <begin position="156"/>
        <end position="218"/>
    </location>
</feature>
<feature type="region of interest" description="Disordered" evidence="3">
    <location>
        <begin position="726"/>
        <end position="813"/>
    </location>
</feature>
<feature type="compositionally biased region" description="Polar residues" evidence="3">
    <location>
        <begin position="158"/>
        <end position="207"/>
    </location>
</feature>
<feature type="compositionally biased region" description="Low complexity" evidence="3">
    <location>
        <begin position="755"/>
        <end position="765"/>
    </location>
</feature>
<comment type="function">
    <text evidence="4 5 6 7 8 9 10">Transcription factor that regulates expression of the genes related to ergosterol biosynthesis, including erg3B, erg24A, erg25A, as well as cyp51A that encodes a target protein of azoles (PubMed:28052140, PubMed:30862750). In coordination with ffmA and ncaA, is responsible for the expression of the ABC transporter abcC/cdr1B/abcG1 related to azole resistance (PubMed:28052140, PubMed:30862750, PubMed:35138125, PubMed:36374043). Directly binds both the cyp51A and abcC/cdr1B/abcG1 promoters at a conserved 34 bp region called the atrR response element (ATRE) (PubMed:28052140, PubMed:30862750, PubMed:35467427, PubMed:35575535). AtrR also binds to the promoter regions of both the sterol response transcription factor srbA and atrR genes themselves, the latter suggesting the possibility that atrR is autoregulated (PubMed:30862750). Also regulates iron uptake, most likely via cooperation with SrbA (PubMed:37093084). AtrR is necessary for hypoxia adaptation and virulence (PubMed:28052140).</text>
</comment>
<comment type="subunit">
    <text evidence="5">Interacts with ncaA.</text>
</comment>
<comment type="subcellular location">
    <subcellularLocation>
        <location evidence="2">Nucleus</location>
    </subcellularLocation>
    <subcellularLocation>
        <location evidence="1">Membrane</location>
        <topology evidence="1">Single-pass membrane protein</topology>
    </subcellularLocation>
</comment>
<comment type="disruption phenotype">
    <text evidence="4">Results in a hypersensitivity to the azole drugs fluconazole, miconazole, and itraconazole (PubMed:28052140). In addition to the medical azoles, also shows hypersensitivity to widely used azole fungicides, bromuconazole, tebuconazole, difenoconazole, and propiconazole (PubMed:28052140). Impairs growth under hypoxic conditions and attenuation of virulence in murine infection model for aspergillosis (PubMed:28052140). Cures azole resistant phenotype in a clinical strain with cyp51A G54E mutation (PubMed:28052140).</text>
</comment>
<sequence>MDGIGDGTESMGFDMPMLMNQQPHLFGSYGHDGSPVAPIFSNPTFQDEPSIGAADDNSDAKRRRIARACDMCRKKKIKCDGKMPKCSHCTNYKTDCVFTQVEKKRNPPKGAKYIEGLENRLGRMESLLRLSGLLSEDDGGKTDLGTLEKRLADRYHASGSNTPHNPQKINIPSQSQIAMSQQNSSSHYSTPRLESQSSPRTAATSPESQKESETEVEGLSDMMCSLVTNNCGETRYIGSSSGFSIFSPKGIQWVNEKTGDNSFQEMISSAYVDDNKWMYWKPEIFSDIFARRVFKPLPPKDEAMSLFKDFFDNFNCMFPLYHEPTFMHLVERQYSRDPYEGSGWWASINVVLAIAHRLRVMSNLVPQEEDRKAWLYLKNAMGVLTELTMRNTDLLSVQALLGMSLFLQGTPNPQPSFFLVAAAIRLSHSIGLHKRGSGFGLNPVEVEQRKRVFWIAYLLDKDICLRSGRPPVQDDDDMNVELPSDDPPDNIGNVPLSDGRSKFNLFRSMCRFATIESKVYKRLYSAKASKQSDGELLNTIGELDKELEDWKDSIPLDFRPEHEIKASHTPLILHVVVLHFAYYNCLTTIHRMSVHHGYWTSRLSNYAIQGLNARPLNPRVFLSAVLCVTAARASINLIKYIPQGDFACVWLILYYPVSALVTLFANILQNPSDARARSDVKLMNVVVNFLSTLVSDESNGSIKRMLGLCGEFERIAKVVLDKAEKESYSKKKRKSPEEPVNLQQSTPEEHPAPSPSTTQPTQAPSRNVPMSSPLFAENPGDPGGNTMADDAGGFASSREIPGTTGVSTNIPPNIQAMPGIAQDYQDMLSPDPLEGVSFADQPPYSATANTPLSSFQQPFVPQDLWQMPMTIEWDWADMSTNFPVFDTNGPPHGGL</sequence>
<gene>
    <name evidence="11" type="primary">atrR</name>
    <name type="ORF">AFUA_2G02690</name>
</gene>
<reference key="1">
    <citation type="journal article" date="2005" name="Nature">
        <title>Genomic sequence of the pathogenic and allergenic filamentous fungus Aspergillus fumigatus.</title>
        <authorList>
            <person name="Nierman W.C."/>
            <person name="Pain A."/>
            <person name="Anderson M.J."/>
            <person name="Wortman J.R."/>
            <person name="Kim H.S."/>
            <person name="Arroyo J."/>
            <person name="Berriman M."/>
            <person name="Abe K."/>
            <person name="Archer D.B."/>
            <person name="Bermejo C."/>
            <person name="Bennett J.W."/>
            <person name="Bowyer P."/>
            <person name="Chen D."/>
            <person name="Collins M."/>
            <person name="Coulsen R."/>
            <person name="Davies R."/>
            <person name="Dyer P.S."/>
            <person name="Farman M.L."/>
            <person name="Fedorova N."/>
            <person name="Fedorova N.D."/>
            <person name="Feldblyum T.V."/>
            <person name="Fischer R."/>
            <person name="Fosker N."/>
            <person name="Fraser A."/>
            <person name="Garcia J.L."/>
            <person name="Garcia M.J."/>
            <person name="Goble A."/>
            <person name="Goldman G.H."/>
            <person name="Gomi K."/>
            <person name="Griffith-Jones S."/>
            <person name="Gwilliam R."/>
            <person name="Haas B.J."/>
            <person name="Haas H."/>
            <person name="Harris D.E."/>
            <person name="Horiuchi H."/>
            <person name="Huang J."/>
            <person name="Humphray S."/>
            <person name="Jimenez J."/>
            <person name="Keller N."/>
            <person name="Khouri H."/>
            <person name="Kitamoto K."/>
            <person name="Kobayashi T."/>
            <person name="Konzack S."/>
            <person name="Kulkarni R."/>
            <person name="Kumagai T."/>
            <person name="Lafton A."/>
            <person name="Latge J.-P."/>
            <person name="Li W."/>
            <person name="Lord A."/>
            <person name="Lu C."/>
            <person name="Majoros W.H."/>
            <person name="May G.S."/>
            <person name="Miller B.L."/>
            <person name="Mohamoud Y."/>
            <person name="Molina M."/>
            <person name="Monod M."/>
            <person name="Mouyna I."/>
            <person name="Mulligan S."/>
            <person name="Murphy L.D."/>
            <person name="O'Neil S."/>
            <person name="Paulsen I."/>
            <person name="Penalva M.A."/>
            <person name="Pertea M."/>
            <person name="Price C."/>
            <person name="Pritchard B.L."/>
            <person name="Quail M.A."/>
            <person name="Rabbinowitsch E."/>
            <person name="Rawlins N."/>
            <person name="Rajandream M.A."/>
            <person name="Reichard U."/>
            <person name="Renauld H."/>
            <person name="Robson G.D."/>
            <person name="Rodriguez de Cordoba S."/>
            <person name="Rodriguez-Pena J.M."/>
            <person name="Ronning C.M."/>
            <person name="Rutter S."/>
            <person name="Salzberg S.L."/>
            <person name="Sanchez M."/>
            <person name="Sanchez-Ferrero J.C."/>
            <person name="Saunders D."/>
            <person name="Seeger K."/>
            <person name="Squares R."/>
            <person name="Squares S."/>
            <person name="Takeuchi M."/>
            <person name="Tekaia F."/>
            <person name="Turner G."/>
            <person name="Vazquez de Aldana C.R."/>
            <person name="Weidman J."/>
            <person name="White O."/>
            <person name="Woodward J.R."/>
            <person name="Yu J.-H."/>
            <person name="Fraser C.M."/>
            <person name="Galagan J.E."/>
            <person name="Asai K."/>
            <person name="Machida M."/>
            <person name="Hall N."/>
            <person name="Barrell B.G."/>
            <person name="Denning D.W."/>
        </authorList>
    </citation>
    <scope>NUCLEOTIDE SEQUENCE [LARGE SCALE GENOMIC DNA]</scope>
    <source>
        <strain>ATCC MYA-4609 / CBS 101355 / FGSC A1100 / Af293</strain>
    </source>
</reference>
<reference key="2">
    <citation type="journal article" date="2017" name="PLoS Pathog.">
        <title>A novel Zn2-Cys6 transcription factor atrR plays a key role in an azole resistance mechanism of Aspergillus fumigatus by co-regulating cyp51A and cdr1B Expressions.</title>
        <authorList>
            <person name="Hagiwara D."/>
            <person name="Miura D."/>
            <person name="Shimizu K."/>
            <person name="Paul S."/>
            <person name="Ohba A."/>
            <person name="Gonoi T."/>
            <person name="Watanabe A."/>
            <person name="Kamei K."/>
            <person name="Shintani T."/>
            <person name="Moye-Rowley W.S."/>
            <person name="Kawamoto S."/>
            <person name="Gomi K."/>
        </authorList>
    </citation>
    <scope>FUNCTION</scope>
    <scope>DISRUPTION PHENOTYPE</scope>
</reference>
<reference key="3">
    <citation type="journal article" date="2019" name="MBio">
        <title>AtrR is an essential determinant of azole resistance in Aspergillus fumigatus.</title>
        <authorList>
            <person name="Paul S."/>
            <person name="Stamnes M."/>
            <person name="Thomas G.H."/>
            <person name="Liu H."/>
            <person name="Hagiwara D."/>
            <person name="Gomi K."/>
            <person name="Filler S.G."/>
            <person name="Moye-Rowley W.S."/>
        </authorList>
    </citation>
    <scope>FUNCTION</scope>
    <scope>DISRUPTION PHENOTYPE</scope>
</reference>
<reference key="4">
    <citation type="journal article" date="2022" name="Microbiol. Spectr.">
        <title>Azole resistance-associated regulatory motifs within the promoter of cyp51A in Aspergillus fumigatus.</title>
        <authorList>
            <person name="Kuehbacher A."/>
            <person name="Peiffer M."/>
            <person name="Hortschansky P."/>
            <person name="Merschak P."/>
            <person name="Bromley M.J."/>
            <person name="Haas H."/>
            <person name="Brakhage A.A."/>
            <person name="Gsaller F."/>
        </authorList>
    </citation>
    <scope>FUNCTION</scope>
    <scope>DNA-BINDING</scope>
</reference>
<reference key="5">
    <citation type="journal article" date="2022" name="MBio">
        <title>Differential functions of individual transcription factor binding sites in the tandem repeats found in clinically relevant cyp51A promoters in Aspergillus fumigatus.</title>
        <authorList>
            <person name="Paul S."/>
            <person name="Verweij P.E."/>
            <person name="Melchers W.J.G."/>
            <person name="Moye-Rowley W.S."/>
        </authorList>
    </citation>
    <scope>FUNCTION</scope>
    <scope>DNA-BINDING</scope>
</reference>
<reference key="6">
    <citation type="journal article" date="2023" name="MBio">
        <title>Regulation of high-affinity iron acquisition, including acquisition mediated by the iron permease FtrA, is Coordinated by atrR, srbA, and sreA in Aspergillus fumigatus.</title>
        <authorList>
            <person name="Yap A."/>
            <person name="Volz R."/>
            <person name="Paul S."/>
            <person name="Moye-Rowley W.S."/>
            <person name="Haas H."/>
        </authorList>
    </citation>
    <scope>FUNCTION</scope>
</reference>
<reference key="7">
    <citation type="journal article" date="2022" name="MSphere">
        <title>Biochemical identification of a nuclear coactivator protein required for AtrR-Dependent Gene Regulation in Aspergillus fumigatus.</title>
        <authorList>
            <person name="Paul S."/>
            <person name="Ror S."/>
            <person name="McDonald W.H."/>
            <person name="Moye-Rowley W.S."/>
        </authorList>
    </citation>
    <scope>FUNCTION</scope>
    <scope>INTERACTION WITH NCAA</scope>
</reference>
<reference key="8">
    <citation type="journal article" date="2022" name="MSphere">
        <title>Aspergillus fumigatus ffmA encodes a C2H2-containing transcriptional regulator that modulates azole resistance and is required for normal growth.</title>
        <authorList>
            <person name="Paul S."/>
            <person name="Bowyer P."/>
            <person name="Bromley M."/>
            <person name="Moye-Rowley W.S."/>
        </authorList>
    </citation>
    <scope>FUNCTION</scope>
</reference>
<protein>
    <recommendedName>
        <fullName evidence="11">ABC-transporter-regulating transcription factor</fullName>
    </recommendedName>
</protein>
<organism>
    <name type="scientific">Aspergillus fumigatus (strain ATCC MYA-4609 / CBS 101355 / FGSC A1100 / Af293)</name>
    <name type="common">Neosartorya fumigata</name>
    <dbReference type="NCBI Taxonomy" id="330879"/>
    <lineage>
        <taxon>Eukaryota</taxon>
        <taxon>Fungi</taxon>
        <taxon>Dikarya</taxon>
        <taxon>Ascomycota</taxon>
        <taxon>Pezizomycotina</taxon>
        <taxon>Eurotiomycetes</taxon>
        <taxon>Eurotiomycetidae</taxon>
        <taxon>Eurotiales</taxon>
        <taxon>Aspergillaceae</taxon>
        <taxon>Aspergillus</taxon>
        <taxon>Aspergillus subgen. Fumigati</taxon>
    </lineage>
</organism>
<dbReference type="EMBL" id="AAHF01000008">
    <property type="protein sequence ID" value="EAL87366.1"/>
    <property type="molecule type" value="Genomic_DNA"/>
</dbReference>
<dbReference type="RefSeq" id="XP_749404.1">
    <property type="nucleotide sequence ID" value="XM_744311.1"/>
</dbReference>
<dbReference type="STRING" id="330879.Q4WI89"/>
<dbReference type="EnsemblFungi" id="EAL87366">
    <property type="protein sequence ID" value="EAL87366"/>
    <property type="gene ID" value="AFUA_2G02690"/>
</dbReference>
<dbReference type="GeneID" id="3506650"/>
<dbReference type="KEGG" id="afm:AFUA_2G02690"/>
<dbReference type="VEuPathDB" id="FungiDB:Afu2g02690"/>
<dbReference type="eggNOG" id="ENOG502QZJZ">
    <property type="taxonomic scope" value="Eukaryota"/>
</dbReference>
<dbReference type="HOGENOM" id="CLU_011099_0_0_1"/>
<dbReference type="InParanoid" id="Q4WI89"/>
<dbReference type="OrthoDB" id="2123952at2759"/>
<dbReference type="Proteomes" id="UP000002530">
    <property type="component" value="Chromosome 2"/>
</dbReference>
<dbReference type="GO" id="GO:0016020">
    <property type="term" value="C:membrane"/>
    <property type="evidence" value="ECO:0007669"/>
    <property type="project" value="UniProtKB-SubCell"/>
</dbReference>
<dbReference type="GO" id="GO:0005634">
    <property type="term" value="C:nucleus"/>
    <property type="evidence" value="ECO:0000318"/>
    <property type="project" value="GO_Central"/>
</dbReference>
<dbReference type="GO" id="GO:0000981">
    <property type="term" value="F:DNA-binding transcription factor activity, RNA polymerase II-specific"/>
    <property type="evidence" value="ECO:0000318"/>
    <property type="project" value="GO_Central"/>
</dbReference>
<dbReference type="GO" id="GO:0043565">
    <property type="term" value="F:sequence-specific DNA binding"/>
    <property type="evidence" value="ECO:0000318"/>
    <property type="project" value="GO_Central"/>
</dbReference>
<dbReference type="GO" id="GO:0008270">
    <property type="term" value="F:zinc ion binding"/>
    <property type="evidence" value="ECO:0007669"/>
    <property type="project" value="InterPro"/>
</dbReference>
<dbReference type="GO" id="GO:0006351">
    <property type="term" value="P:DNA-templated transcription"/>
    <property type="evidence" value="ECO:0007669"/>
    <property type="project" value="InterPro"/>
</dbReference>
<dbReference type="GO" id="GO:0045944">
    <property type="term" value="P:positive regulation of transcription by RNA polymerase II"/>
    <property type="evidence" value="ECO:0000318"/>
    <property type="project" value="GO_Central"/>
</dbReference>
<dbReference type="CDD" id="cd12148">
    <property type="entry name" value="fungal_TF_MHR"/>
    <property type="match status" value="1"/>
</dbReference>
<dbReference type="CDD" id="cd00067">
    <property type="entry name" value="GAL4"/>
    <property type="match status" value="1"/>
</dbReference>
<dbReference type="Gene3D" id="4.10.240.10">
    <property type="entry name" value="Zn(2)-C6 fungal-type DNA-binding domain"/>
    <property type="match status" value="1"/>
</dbReference>
<dbReference type="InterPro" id="IPR050987">
    <property type="entry name" value="AtrR-like"/>
</dbReference>
<dbReference type="InterPro" id="IPR007219">
    <property type="entry name" value="Transcription_factor_dom_fun"/>
</dbReference>
<dbReference type="InterPro" id="IPR036864">
    <property type="entry name" value="Zn2-C6_fun-type_DNA-bd_sf"/>
</dbReference>
<dbReference type="InterPro" id="IPR001138">
    <property type="entry name" value="Zn2Cys6_DnaBD"/>
</dbReference>
<dbReference type="PANTHER" id="PTHR46910:SF25">
    <property type="entry name" value="ABC-TRANSPORTER-REGULATING TRANSCRIPTION FACTOR"/>
    <property type="match status" value="1"/>
</dbReference>
<dbReference type="PANTHER" id="PTHR46910">
    <property type="entry name" value="TRANSCRIPTION FACTOR PDR1"/>
    <property type="match status" value="1"/>
</dbReference>
<dbReference type="Pfam" id="PF04082">
    <property type="entry name" value="Fungal_trans"/>
    <property type="match status" value="1"/>
</dbReference>
<dbReference type="Pfam" id="PF00172">
    <property type="entry name" value="Zn_clus"/>
    <property type="match status" value="1"/>
</dbReference>
<dbReference type="SMART" id="SM00906">
    <property type="entry name" value="Fungal_trans"/>
    <property type="match status" value="1"/>
</dbReference>
<dbReference type="SMART" id="SM00066">
    <property type="entry name" value="GAL4"/>
    <property type="match status" value="1"/>
</dbReference>
<dbReference type="SUPFAM" id="SSF57701">
    <property type="entry name" value="Zn2/Cys6 DNA-binding domain"/>
    <property type="match status" value="1"/>
</dbReference>
<dbReference type="PROSITE" id="PS00463">
    <property type="entry name" value="ZN2_CY6_FUNGAL_1"/>
    <property type="match status" value="1"/>
</dbReference>
<dbReference type="PROSITE" id="PS50048">
    <property type="entry name" value="ZN2_CY6_FUNGAL_2"/>
    <property type="match status" value="1"/>
</dbReference>
<name>ATRR_ASPFU</name>